<sequence length="272" mass="29130">MTVFAASQQSAAGAGMLPSHQARLACRAGQADTTAGVAPGYVQGNLAILPEKFAAAFHRFCQLNPKPCPIIGMSDVGNPMIPALGLDLDIRTDLPRYRVWRDGEVIEEPTDIMAHWRDDLVAFVIGCSFSFEEALLADDIAIRHIDCKVRVPMYRTNIPCAPAGPFAGPMVVSMRPMKPKDAIRAVQITSRFPSVHGAPVHIGLPQSIGIADIAKPDYGDPVPIADDELPVFWACGVTPQAVIAAAKVPFAITHAPGLMLVTDLKNKHLAVL</sequence>
<feature type="chain" id="PRO_1000070415" description="Putative hydro-lyase RPB_3621">
    <location>
        <begin position="1"/>
        <end position="272"/>
    </location>
</feature>
<accession>Q2ITZ4</accession>
<comment type="similarity">
    <text evidence="1">Belongs to the D-glutamate cyclase family.</text>
</comment>
<dbReference type="EC" id="4.2.1.-" evidence="1"/>
<dbReference type="EMBL" id="CP000250">
    <property type="protein sequence ID" value="ABD08316.1"/>
    <property type="molecule type" value="Genomic_DNA"/>
</dbReference>
<dbReference type="RefSeq" id="WP_011442500.1">
    <property type="nucleotide sequence ID" value="NC_007778.1"/>
</dbReference>
<dbReference type="SMR" id="Q2ITZ4"/>
<dbReference type="STRING" id="316058.RPB_3621"/>
<dbReference type="KEGG" id="rpb:RPB_3621"/>
<dbReference type="eggNOG" id="COG4336">
    <property type="taxonomic scope" value="Bacteria"/>
</dbReference>
<dbReference type="HOGENOM" id="CLU_059759_0_0_5"/>
<dbReference type="OrthoDB" id="149585at2"/>
<dbReference type="Proteomes" id="UP000008809">
    <property type="component" value="Chromosome"/>
</dbReference>
<dbReference type="GO" id="GO:0016829">
    <property type="term" value="F:lyase activity"/>
    <property type="evidence" value="ECO:0007669"/>
    <property type="project" value="UniProtKB-KW"/>
</dbReference>
<dbReference type="FunFam" id="3.30.2040.10:FF:000001">
    <property type="entry name" value="D-glutamate cyclase, mitochondrial"/>
    <property type="match status" value="1"/>
</dbReference>
<dbReference type="Gene3D" id="3.40.1640.10">
    <property type="entry name" value="PSTPO5379-like"/>
    <property type="match status" value="1"/>
</dbReference>
<dbReference type="Gene3D" id="3.30.2040.10">
    <property type="entry name" value="PSTPO5379-like domain"/>
    <property type="match status" value="1"/>
</dbReference>
<dbReference type="HAMAP" id="MF_01830">
    <property type="entry name" value="Hydro_lyase"/>
    <property type="match status" value="1"/>
</dbReference>
<dbReference type="InterPro" id="IPR009906">
    <property type="entry name" value="D-Glu_cyclase"/>
</dbReference>
<dbReference type="InterPro" id="IPR038021">
    <property type="entry name" value="Putative_hydro-lyase"/>
</dbReference>
<dbReference type="InterPro" id="IPR016938">
    <property type="entry name" value="UPF0317"/>
</dbReference>
<dbReference type="NCBIfam" id="NF003969">
    <property type="entry name" value="PRK05463.1"/>
    <property type="match status" value="1"/>
</dbReference>
<dbReference type="PANTHER" id="PTHR32022">
    <property type="entry name" value="D-GLUTAMATE CYCLASE, MITOCHONDRIAL"/>
    <property type="match status" value="1"/>
</dbReference>
<dbReference type="PANTHER" id="PTHR32022:SF10">
    <property type="entry name" value="D-GLUTAMATE CYCLASE, MITOCHONDRIAL"/>
    <property type="match status" value="1"/>
</dbReference>
<dbReference type="Pfam" id="PF07286">
    <property type="entry name" value="D-Glu_cyclase"/>
    <property type="match status" value="1"/>
</dbReference>
<dbReference type="PIRSF" id="PIRSF029755">
    <property type="entry name" value="UCP029755"/>
    <property type="match status" value="1"/>
</dbReference>
<dbReference type="SUPFAM" id="SSF160920">
    <property type="entry name" value="PSTPO5379-like"/>
    <property type="match status" value="1"/>
</dbReference>
<gene>
    <name type="ordered locus">RPB_3621</name>
</gene>
<organism>
    <name type="scientific">Rhodopseudomonas palustris (strain HaA2)</name>
    <dbReference type="NCBI Taxonomy" id="316058"/>
    <lineage>
        <taxon>Bacteria</taxon>
        <taxon>Pseudomonadati</taxon>
        <taxon>Pseudomonadota</taxon>
        <taxon>Alphaproteobacteria</taxon>
        <taxon>Hyphomicrobiales</taxon>
        <taxon>Nitrobacteraceae</taxon>
        <taxon>Rhodopseudomonas</taxon>
    </lineage>
</organism>
<keyword id="KW-0456">Lyase</keyword>
<keyword id="KW-1185">Reference proteome</keyword>
<name>Y3621_RHOP2</name>
<reference key="1">
    <citation type="submission" date="2006-01" db="EMBL/GenBank/DDBJ databases">
        <title>Complete sequence of Rhodopseudomonas palustris HaA2.</title>
        <authorList>
            <consortium name="US DOE Joint Genome Institute"/>
            <person name="Copeland A."/>
            <person name="Lucas S."/>
            <person name="Lapidus A."/>
            <person name="Barry K."/>
            <person name="Detter J.C."/>
            <person name="Glavina T."/>
            <person name="Hammon N."/>
            <person name="Israni S."/>
            <person name="Pitluck S."/>
            <person name="Chain P."/>
            <person name="Malfatti S."/>
            <person name="Shin M."/>
            <person name="Vergez L."/>
            <person name="Schmutz J."/>
            <person name="Larimer F."/>
            <person name="Land M."/>
            <person name="Hauser L."/>
            <person name="Pelletier D.A."/>
            <person name="Kyrpides N."/>
            <person name="Anderson I."/>
            <person name="Oda Y."/>
            <person name="Harwood C.S."/>
            <person name="Richardson P."/>
        </authorList>
    </citation>
    <scope>NUCLEOTIDE SEQUENCE [LARGE SCALE GENOMIC DNA]</scope>
    <source>
        <strain>HaA2</strain>
    </source>
</reference>
<proteinExistence type="inferred from homology"/>
<evidence type="ECO:0000255" key="1">
    <source>
        <dbReference type="HAMAP-Rule" id="MF_01830"/>
    </source>
</evidence>
<protein>
    <recommendedName>
        <fullName evidence="1">Putative hydro-lyase RPB_3621</fullName>
        <ecNumber evidence="1">4.2.1.-</ecNumber>
    </recommendedName>
</protein>